<reference key="1">
    <citation type="journal article" date="2007" name="Genome Biol.">
        <title>Genome analysis and genome-wide proteomics of Thermococcus gammatolerans, the most radioresistant organism known amongst the Archaea.</title>
        <authorList>
            <person name="Zivanovic Y."/>
            <person name="Armengaud J."/>
            <person name="Lagorce A."/>
            <person name="Leplat C."/>
            <person name="Guerin P."/>
            <person name="Dutertre M."/>
            <person name="Anthouard V."/>
            <person name="Forterre P."/>
            <person name="Wincker P."/>
            <person name="Confalonieri F."/>
        </authorList>
    </citation>
    <scope>NUCLEOTIDE SEQUENCE [LARGE SCALE GENOMIC DNA]</scope>
    <source>
        <strain>DSM 15229 / JCM 11827 / EJ3</strain>
    </source>
</reference>
<name>RS19_THEGJ</name>
<sequence>MARKKEFRYRGYTLDELLNMSLEEFAKLLPARQRRSLKRGLSPEQKKLLRKIRLAKKGKYNKPIRTHSRDMIVLPEMVGITIHVHNGKEFVPIEIKPEMIGHYLGEFALTRKIVQHGSPGVGATRSSMFVAVK</sequence>
<gene>
    <name evidence="1" type="primary">rps19</name>
    <name type="ordered locus">TGAM_1999</name>
</gene>
<organism>
    <name type="scientific">Thermococcus gammatolerans (strain DSM 15229 / JCM 11827 / EJ3)</name>
    <dbReference type="NCBI Taxonomy" id="593117"/>
    <lineage>
        <taxon>Archaea</taxon>
        <taxon>Methanobacteriati</taxon>
        <taxon>Methanobacteriota</taxon>
        <taxon>Thermococci</taxon>
        <taxon>Thermococcales</taxon>
        <taxon>Thermococcaceae</taxon>
        <taxon>Thermococcus</taxon>
    </lineage>
</organism>
<accession>C5A282</accession>
<keyword id="KW-1185">Reference proteome</keyword>
<keyword id="KW-0687">Ribonucleoprotein</keyword>
<keyword id="KW-0689">Ribosomal protein</keyword>
<keyword id="KW-0694">RNA-binding</keyword>
<keyword id="KW-0699">rRNA-binding</keyword>
<evidence type="ECO:0000255" key="1">
    <source>
        <dbReference type="HAMAP-Rule" id="MF_00531"/>
    </source>
</evidence>
<evidence type="ECO:0000305" key="2"/>
<feature type="chain" id="PRO_1000211821" description="Small ribosomal subunit protein uS19">
    <location>
        <begin position="1"/>
        <end position="133"/>
    </location>
</feature>
<comment type="function">
    <text evidence="1">Protein S19 forms a complex with S13 that binds strongly to the 16S ribosomal RNA.</text>
</comment>
<comment type="similarity">
    <text evidence="1">Belongs to the universal ribosomal protein uS19 family.</text>
</comment>
<protein>
    <recommendedName>
        <fullName evidence="1">Small ribosomal subunit protein uS19</fullName>
    </recommendedName>
    <alternativeName>
        <fullName evidence="2">30S ribosomal protein S19</fullName>
    </alternativeName>
</protein>
<proteinExistence type="inferred from homology"/>
<dbReference type="EMBL" id="CP001398">
    <property type="protein sequence ID" value="ACS34501.1"/>
    <property type="molecule type" value="Genomic_DNA"/>
</dbReference>
<dbReference type="RefSeq" id="WP_015859604.1">
    <property type="nucleotide sequence ID" value="NC_012804.1"/>
</dbReference>
<dbReference type="SMR" id="C5A282"/>
<dbReference type="STRING" id="593117.TGAM_1999"/>
<dbReference type="PaxDb" id="593117-TGAM_1999"/>
<dbReference type="GeneID" id="7987056"/>
<dbReference type="KEGG" id="tga:TGAM_1999"/>
<dbReference type="PATRIC" id="fig|593117.10.peg.2009"/>
<dbReference type="eggNOG" id="arCOG04099">
    <property type="taxonomic scope" value="Archaea"/>
</dbReference>
<dbReference type="HOGENOM" id="CLU_097347_1_1_2"/>
<dbReference type="OrthoDB" id="30559at2157"/>
<dbReference type="Proteomes" id="UP000001488">
    <property type="component" value="Chromosome"/>
</dbReference>
<dbReference type="GO" id="GO:0022627">
    <property type="term" value="C:cytosolic small ribosomal subunit"/>
    <property type="evidence" value="ECO:0007669"/>
    <property type="project" value="TreeGrafter"/>
</dbReference>
<dbReference type="GO" id="GO:0019843">
    <property type="term" value="F:rRNA binding"/>
    <property type="evidence" value="ECO:0007669"/>
    <property type="project" value="UniProtKB-UniRule"/>
</dbReference>
<dbReference type="GO" id="GO:0003735">
    <property type="term" value="F:structural constituent of ribosome"/>
    <property type="evidence" value="ECO:0007669"/>
    <property type="project" value="InterPro"/>
</dbReference>
<dbReference type="GO" id="GO:0000028">
    <property type="term" value="P:ribosomal small subunit assembly"/>
    <property type="evidence" value="ECO:0007669"/>
    <property type="project" value="TreeGrafter"/>
</dbReference>
<dbReference type="GO" id="GO:0006412">
    <property type="term" value="P:translation"/>
    <property type="evidence" value="ECO:0007669"/>
    <property type="project" value="UniProtKB-UniRule"/>
</dbReference>
<dbReference type="FunFam" id="3.30.860.10:FF:000002">
    <property type="entry name" value="40S ribosomal protein S15"/>
    <property type="match status" value="1"/>
</dbReference>
<dbReference type="Gene3D" id="3.30.860.10">
    <property type="entry name" value="30s Ribosomal Protein S19, Chain A"/>
    <property type="match status" value="1"/>
</dbReference>
<dbReference type="HAMAP" id="MF_00531">
    <property type="entry name" value="Ribosomal_uS19"/>
    <property type="match status" value="1"/>
</dbReference>
<dbReference type="InterPro" id="IPR002222">
    <property type="entry name" value="Ribosomal_uS19"/>
</dbReference>
<dbReference type="InterPro" id="IPR020934">
    <property type="entry name" value="Ribosomal_uS19_CS"/>
</dbReference>
<dbReference type="InterPro" id="IPR005713">
    <property type="entry name" value="Ribosomal_uS19_euk/arc"/>
</dbReference>
<dbReference type="InterPro" id="IPR023575">
    <property type="entry name" value="Ribosomal_uS19_SF"/>
</dbReference>
<dbReference type="NCBIfam" id="NF003121">
    <property type="entry name" value="PRK04038.1"/>
    <property type="match status" value="1"/>
</dbReference>
<dbReference type="NCBIfam" id="TIGR01025">
    <property type="entry name" value="uS19_arch"/>
    <property type="match status" value="1"/>
</dbReference>
<dbReference type="PANTHER" id="PTHR11880">
    <property type="entry name" value="RIBOSOMAL PROTEIN S19P FAMILY MEMBER"/>
    <property type="match status" value="1"/>
</dbReference>
<dbReference type="PANTHER" id="PTHR11880:SF2">
    <property type="entry name" value="SMALL RIBOSOMAL SUBUNIT PROTEIN US19"/>
    <property type="match status" value="1"/>
</dbReference>
<dbReference type="Pfam" id="PF00203">
    <property type="entry name" value="Ribosomal_S19"/>
    <property type="match status" value="1"/>
</dbReference>
<dbReference type="PIRSF" id="PIRSF002144">
    <property type="entry name" value="Ribosomal_S19"/>
    <property type="match status" value="1"/>
</dbReference>
<dbReference type="PRINTS" id="PR00975">
    <property type="entry name" value="RIBOSOMALS19"/>
</dbReference>
<dbReference type="SUPFAM" id="SSF54570">
    <property type="entry name" value="Ribosomal protein S19"/>
    <property type="match status" value="1"/>
</dbReference>
<dbReference type="PROSITE" id="PS00323">
    <property type="entry name" value="RIBOSOMAL_S19"/>
    <property type="match status" value="1"/>
</dbReference>